<organism>
    <name type="scientific">Drosophila melanogaster</name>
    <name type="common">Fruit fly</name>
    <dbReference type="NCBI Taxonomy" id="7227"/>
    <lineage>
        <taxon>Eukaryota</taxon>
        <taxon>Metazoa</taxon>
        <taxon>Ecdysozoa</taxon>
        <taxon>Arthropoda</taxon>
        <taxon>Hexapoda</taxon>
        <taxon>Insecta</taxon>
        <taxon>Pterygota</taxon>
        <taxon>Neoptera</taxon>
        <taxon>Endopterygota</taxon>
        <taxon>Diptera</taxon>
        <taxon>Brachycera</taxon>
        <taxon>Muscomorpha</taxon>
        <taxon>Ephydroidea</taxon>
        <taxon>Drosophilidae</taxon>
        <taxon>Drosophila</taxon>
        <taxon>Sophophora</taxon>
    </lineage>
</organism>
<reference key="1">
    <citation type="journal article" date="1991" name="Cell">
        <title>Staufen, a gene required to localize maternal RNAs in the Drosophila egg.</title>
        <authorList>
            <person name="St Johnston D."/>
            <person name="Beuchle D."/>
            <person name="Nuesslein-Volhard C."/>
        </authorList>
    </citation>
    <scope>NUCLEOTIDE SEQUENCE [MRNA] (ISOFORM A)</scope>
    <scope>FUNCTION</scope>
    <scope>TISSUE SPECIFICITY</scope>
    <scope>DEVELOPMENTAL STAGE</scope>
</reference>
<reference key="2">
    <citation type="journal article" date="2000" name="Science">
        <title>The genome sequence of Drosophila melanogaster.</title>
        <authorList>
            <person name="Adams M.D."/>
            <person name="Celniker S.E."/>
            <person name="Holt R.A."/>
            <person name="Evans C.A."/>
            <person name="Gocayne J.D."/>
            <person name="Amanatides P.G."/>
            <person name="Scherer S.E."/>
            <person name="Li P.W."/>
            <person name="Hoskins R.A."/>
            <person name="Galle R.F."/>
            <person name="George R.A."/>
            <person name="Lewis S.E."/>
            <person name="Richards S."/>
            <person name="Ashburner M."/>
            <person name="Henderson S.N."/>
            <person name="Sutton G.G."/>
            <person name="Wortman J.R."/>
            <person name="Yandell M.D."/>
            <person name="Zhang Q."/>
            <person name="Chen L.X."/>
            <person name="Brandon R.C."/>
            <person name="Rogers Y.-H.C."/>
            <person name="Blazej R.G."/>
            <person name="Champe M."/>
            <person name="Pfeiffer B.D."/>
            <person name="Wan K.H."/>
            <person name="Doyle C."/>
            <person name="Baxter E.G."/>
            <person name="Helt G."/>
            <person name="Nelson C.R."/>
            <person name="Miklos G.L.G."/>
            <person name="Abril J.F."/>
            <person name="Agbayani A."/>
            <person name="An H.-J."/>
            <person name="Andrews-Pfannkoch C."/>
            <person name="Baldwin D."/>
            <person name="Ballew R.M."/>
            <person name="Basu A."/>
            <person name="Baxendale J."/>
            <person name="Bayraktaroglu L."/>
            <person name="Beasley E.M."/>
            <person name="Beeson K.Y."/>
            <person name="Benos P.V."/>
            <person name="Berman B.P."/>
            <person name="Bhandari D."/>
            <person name="Bolshakov S."/>
            <person name="Borkova D."/>
            <person name="Botchan M.R."/>
            <person name="Bouck J."/>
            <person name="Brokstein P."/>
            <person name="Brottier P."/>
            <person name="Burtis K.C."/>
            <person name="Busam D.A."/>
            <person name="Butler H."/>
            <person name="Cadieu E."/>
            <person name="Center A."/>
            <person name="Chandra I."/>
            <person name="Cherry J.M."/>
            <person name="Cawley S."/>
            <person name="Dahlke C."/>
            <person name="Davenport L.B."/>
            <person name="Davies P."/>
            <person name="de Pablos B."/>
            <person name="Delcher A."/>
            <person name="Deng Z."/>
            <person name="Mays A.D."/>
            <person name="Dew I."/>
            <person name="Dietz S.M."/>
            <person name="Dodson K."/>
            <person name="Doup L.E."/>
            <person name="Downes M."/>
            <person name="Dugan-Rocha S."/>
            <person name="Dunkov B.C."/>
            <person name="Dunn P."/>
            <person name="Durbin K.J."/>
            <person name="Evangelista C.C."/>
            <person name="Ferraz C."/>
            <person name="Ferriera S."/>
            <person name="Fleischmann W."/>
            <person name="Fosler C."/>
            <person name="Gabrielian A.E."/>
            <person name="Garg N.S."/>
            <person name="Gelbart W.M."/>
            <person name="Glasser K."/>
            <person name="Glodek A."/>
            <person name="Gong F."/>
            <person name="Gorrell J.H."/>
            <person name="Gu Z."/>
            <person name="Guan P."/>
            <person name="Harris M."/>
            <person name="Harris N.L."/>
            <person name="Harvey D.A."/>
            <person name="Heiman T.J."/>
            <person name="Hernandez J.R."/>
            <person name="Houck J."/>
            <person name="Hostin D."/>
            <person name="Houston K.A."/>
            <person name="Howland T.J."/>
            <person name="Wei M.-H."/>
            <person name="Ibegwam C."/>
            <person name="Jalali M."/>
            <person name="Kalush F."/>
            <person name="Karpen G.H."/>
            <person name="Ke Z."/>
            <person name="Kennison J.A."/>
            <person name="Ketchum K.A."/>
            <person name="Kimmel B.E."/>
            <person name="Kodira C.D."/>
            <person name="Kraft C.L."/>
            <person name="Kravitz S."/>
            <person name="Kulp D."/>
            <person name="Lai Z."/>
            <person name="Lasko P."/>
            <person name="Lei Y."/>
            <person name="Levitsky A.A."/>
            <person name="Li J.H."/>
            <person name="Li Z."/>
            <person name="Liang Y."/>
            <person name="Lin X."/>
            <person name="Liu X."/>
            <person name="Mattei B."/>
            <person name="McIntosh T.C."/>
            <person name="McLeod M.P."/>
            <person name="McPherson D."/>
            <person name="Merkulov G."/>
            <person name="Milshina N.V."/>
            <person name="Mobarry C."/>
            <person name="Morris J."/>
            <person name="Moshrefi A."/>
            <person name="Mount S.M."/>
            <person name="Moy M."/>
            <person name="Murphy B."/>
            <person name="Murphy L."/>
            <person name="Muzny D.M."/>
            <person name="Nelson D.L."/>
            <person name="Nelson D.R."/>
            <person name="Nelson K.A."/>
            <person name="Nixon K."/>
            <person name="Nusskern D.R."/>
            <person name="Pacleb J.M."/>
            <person name="Palazzolo M."/>
            <person name="Pittman G.S."/>
            <person name="Pan S."/>
            <person name="Pollard J."/>
            <person name="Puri V."/>
            <person name="Reese M.G."/>
            <person name="Reinert K."/>
            <person name="Remington K."/>
            <person name="Saunders R.D.C."/>
            <person name="Scheeler F."/>
            <person name="Shen H."/>
            <person name="Shue B.C."/>
            <person name="Siden-Kiamos I."/>
            <person name="Simpson M."/>
            <person name="Skupski M.P."/>
            <person name="Smith T.J."/>
            <person name="Spier E."/>
            <person name="Spradling A.C."/>
            <person name="Stapleton M."/>
            <person name="Strong R."/>
            <person name="Sun E."/>
            <person name="Svirskas R."/>
            <person name="Tector C."/>
            <person name="Turner R."/>
            <person name="Venter E."/>
            <person name="Wang A.H."/>
            <person name="Wang X."/>
            <person name="Wang Z.-Y."/>
            <person name="Wassarman D.A."/>
            <person name="Weinstock G.M."/>
            <person name="Weissenbach J."/>
            <person name="Williams S.M."/>
            <person name="Woodage T."/>
            <person name="Worley K.C."/>
            <person name="Wu D."/>
            <person name="Yang S."/>
            <person name="Yao Q.A."/>
            <person name="Ye J."/>
            <person name="Yeh R.-F."/>
            <person name="Zaveri J.S."/>
            <person name="Zhan M."/>
            <person name="Zhang G."/>
            <person name="Zhao Q."/>
            <person name="Zheng L."/>
            <person name="Zheng X.H."/>
            <person name="Zhong F.N."/>
            <person name="Zhong W."/>
            <person name="Zhou X."/>
            <person name="Zhu S.C."/>
            <person name="Zhu X."/>
            <person name="Smith H.O."/>
            <person name="Gibbs R.A."/>
            <person name="Myers E.W."/>
            <person name="Rubin G.M."/>
            <person name="Venter J.C."/>
        </authorList>
    </citation>
    <scope>NUCLEOTIDE SEQUENCE [LARGE SCALE GENOMIC DNA]</scope>
    <source>
        <strain>Berkeley</strain>
    </source>
</reference>
<reference key="3">
    <citation type="journal article" date="2002" name="Genome Biol.">
        <title>Annotation of the Drosophila melanogaster euchromatic genome: a systematic review.</title>
        <authorList>
            <person name="Misra S."/>
            <person name="Crosby M.A."/>
            <person name="Mungall C.J."/>
            <person name="Matthews B.B."/>
            <person name="Campbell K.S."/>
            <person name="Hradecky P."/>
            <person name="Huang Y."/>
            <person name="Kaminker J.S."/>
            <person name="Millburn G.H."/>
            <person name="Prochnik S.E."/>
            <person name="Smith C.D."/>
            <person name="Tupy J.L."/>
            <person name="Whitfield E.J."/>
            <person name="Bayraktaroglu L."/>
            <person name="Berman B.P."/>
            <person name="Bettencourt B.R."/>
            <person name="Celniker S.E."/>
            <person name="de Grey A.D.N.J."/>
            <person name="Drysdale R.A."/>
            <person name="Harris N.L."/>
            <person name="Richter J."/>
            <person name="Russo S."/>
            <person name="Schroeder A.J."/>
            <person name="Shu S.Q."/>
            <person name="Stapleton M."/>
            <person name="Yamada C."/>
            <person name="Ashburner M."/>
            <person name="Gelbart W.M."/>
            <person name="Rubin G.M."/>
            <person name="Lewis S.E."/>
        </authorList>
    </citation>
    <scope>GENOME REANNOTATION</scope>
    <scope>ALTERNATIVE SPLICING</scope>
    <source>
        <strain>Berkeley</strain>
    </source>
</reference>
<reference key="4">
    <citation type="submission" date="2003-08" db="EMBL/GenBank/DDBJ databases">
        <authorList>
            <person name="Stapleton M."/>
            <person name="Brokstein P."/>
            <person name="Hong L."/>
            <person name="Agbayani A."/>
            <person name="Carlson J.W."/>
            <person name="Champe M."/>
            <person name="Chavez C."/>
            <person name="Dorsett V."/>
            <person name="Dresnek D."/>
            <person name="Farfan D."/>
            <person name="Frise E."/>
            <person name="George R.A."/>
            <person name="Gonzalez M."/>
            <person name="Guarin H."/>
            <person name="Kronmiller B."/>
            <person name="Li P.W."/>
            <person name="Liao G."/>
            <person name="Miranda A."/>
            <person name="Mungall C.J."/>
            <person name="Nunoo J."/>
            <person name="Pacleb J.M."/>
            <person name="Paragas V."/>
            <person name="Park S."/>
            <person name="Patel S."/>
            <person name="Phouanenavong S."/>
            <person name="Wan K.H."/>
            <person name="Yu C."/>
            <person name="Lewis S.E."/>
            <person name="Rubin G.M."/>
            <person name="Celniker S.E."/>
        </authorList>
    </citation>
    <scope>NUCLEOTIDE SEQUENCE [LARGE SCALE MRNA] (ISOFORMS A AND B)</scope>
    <source>
        <strain>Berkeley</strain>
        <tissue>Embryo</tissue>
        <tissue>Larva</tissue>
        <tissue>Pupae</tissue>
    </source>
</reference>
<reference key="5">
    <citation type="journal article" date="1994" name="Cell">
        <title>Staufen protein associates with the 3'UTR of bicoid mRNA to form particles that move in a microtubule-dependent manner.</title>
        <authorList>
            <person name="Ferrandon D."/>
            <person name="Elphick L."/>
            <person name="Nusslein-Volhard C."/>
            <person name="St Johnston D."/>
        </authorList>
    </citation>
    <scope>FUNCTION</scope>
    <scope>TISSUE SPECIFICITY</scope>
    <scope>DEVELOPMENTAL STAGE</scope>
</reference>
<reference key="6">
    <citation type="journal article" date="2000" name="EMBO J.">
        <title>Distinct roles of two conserved Staufen domains in oskar mRNA localization and translation.</title>
        <authorList>
            <person name="Micklem D.R."/>
            <person name="Adams J."/>
            <person name="Grunert S."/>
            <person name="St Johnston D."/>
        </authorList>
    </citation>
    <scope>CHARACTERIZATION OF DRBM DOMAINS</scope>
</reference>
<reference key="7">
    <citation type="journal article" date="2008" name="J. Proteome Res.">
        <title>Phosphoproteome analysis of Drosophila melanogaster embryos.</title>
        <authorList>
            <person name="Zhai B."/>
            <person name="Villen J."/>
            <person name="Beausoleil S.A."/>
            <person name="Mintseris J."/>
            <person name="Gygi S.P."/>
        </authorList>
    </citation>
    <scope>PHOSPHORYLATION [LARGE SCALE ANALYSIS] AT SER-563; SER-570; THR-650; THR-655 AND SER-676</scope>
    <scope>IDENTIFICATION BY MASS SPECTROMETRY</scope>
    <source>
        <tissue>Embryo</tissue>
    </source>
</reference>
<reference key="8">
    <citation type="journal article" date="1995" name="EMBO J.">
        <title>NMR solution structure of a dsRNA binding domain from Drosophila staufen protein reveals homology to the N-terminal domain of ribosomal protein S5.</title>
        <authorList>
            <person name="Bycroft M."/>
            <person name="Grunert S."/>
            <person name="Murzin A.G."/>
            <person name="Proctor M."/>
            <person name="St Johnston D."/>
        </authorList>
    </citation>
    <scope>STRUCTURE BY NMR OF 579-646</scope>
</reference>
<reference key="9">
    <citation type="journal article" date="1995" name="EMBO J.">
        <authorList>
            <person name="Bycroft M."/>
            <person name="Grunert S."/>
            <person name="Murzin A.G."/>
            <person name="Proctor M."/>
            <person name="St Johnston D."/>
        </authorList>
    </citation>
    <scope>ERRATUM OF PUBMED:7628456</scope>
</reference>
<reference key="10">
    <citation type="journal article" date="2000" name="EMBO J.">
        <title>RNA recognition by a Staufen double-stranded RNA-binding domain.</title>
        <authorList>
            <person name="Ramos A."/>
            <person name="Grunert S."/>
            <person name="Adams J."/>
            <person name="Micklem D.R."/>
            <person name="Proctor M.R."/>
            <person name="Freund S."/>
            <person name="Bycroft M."/>
            <person name="St Johnston D."/>
            <person name="Varani G."/>
        </authorList>
    </citation>
    <scope>STRUCTURE BY NMR OF 571-646</scope>
    <scope>FUNCTION</scope>
    <scope>MUTAGENESIS OF 581-SER--GLN-582; 584-HIS--GLU-585; ILE-586; PHE-596; 599-LEU--GLU-602; HIS-606; LYS-608; 628-LYS--LYS-629; LYS-632; 633-LYS--ALA-634 AND 635-ALA--ALA-636</scope>
</reference>
<reference key="11">
    <citation type="journal article" date="2006" name="Neuron">
        <title>Staufen- and FMRP-containing neuronal RNPs are structurally and functionally related to somatic P bodies.</title>
        <authorList>
            <person name="Barbee S.A."/>
            <person name="Estes P.S."/>
            <person name="Cziko A.M."/>
            <person name="Hillebrand J."/>
            <person name="Luedeman R.A."/>
            <person name="Coller J.M."/>
            <person name="Johnson N."/>
            <person name="Howlett I.C."/>
            <person name="Geng C."/>
            <person name="Ueda R."/>
            <person name="Brand A.H."/>
            <person name="Newbury S.F."/>
            <person name="Wilhelm J.E."/>
            <person name="Levine R.B."/>
            <person name="Nakamura A."/>
            <person name="Parker R."/>
            <person name="Ramaswami M."/>
        </authorList>
    </citation>
    <scope>FUNCTION</scope>
    <scope>IDENTIFICATION IN A COMPLEX WITH ME31B; TRAL; UPF1; AGO2 AND FMR1</scope>
    <scope>SUBCELLULAR LOCATION</scope>
</reference>
<comment type="function">
    <text evidence="3 4 5 7">RNA-binding protein which forms ribonucleoprotein complexes (RNPs) that play critical roles in the localization, translational repression and turnover of RNAs during embryogenesis, neurotransmission and neurogenesis (PubMed:10698941, PubMed:1712672, PubMed:17178403, PubMed:8001156). In the oocyte, essential for the localization of both the osk/oskar mRNA to the posterior pole and bcd/bicoid RNA to the anterior pole, and is therefore required for the correct anterior-posterior patterning of the developing embryo (PubMed:10698941, PubMed:1712672, PubMed:8001156). Association with osk or bcd at their respective poles, appears to promote the formation and stabilization of the ribonucleoprotein complexes (PubMed:1712672, PubMed:8001156). Integral component of diverse neuritic ribonucleoprotein complexes (RNPs) that mediate the transport, translation and turnover of neuronal RNAs during neuorgenesis and the translation repression of synaptic transcripts in preparation for their dendritic targeting (PubMed:17178403).</text>
</comment>
<comment type="subunit">
    <text evidence="5">Component of neuronal ribonucleoprotein complexes (RNPs) that contains at least various translational repressor and mRNA turnover proteins such as me31B, tral, Upf1, AGO2 and sometimes Fmr1.</text>
</comment>
<comment type="subcellular location">
    <subcellularLocation>
        <location evidence="5">Cytoplasm</location>
        <location evidence="5">Cytoplasmic ribonucleoprotein granule</location>
    </subcellularLocation>
    <text evidence="5">Detected within ribonucleoprotein granules in pherpiheral nerves that are exiting the larval central nervous system, and cell bodies within the ventral ganglion.</text>
</comment>
<comment type="alternative products">
    <event type="alternative splicing"/>
    <isoform>
        <id>P25159-1</id>
        <name>A</name>
        <sequence type="displayed"/>
    </isoform>
    <isoform>
        <id>P25159-2</id>
        <name>B</name>
        <sequence type="described" ref="VSP_014781"/>
    </isoform>
</comment>
<comment type="tissue specificity">
    <text evidence="4 7">Polar granules at the posterior pole of the oocyte, and by the time the egg is laid, at the anterior pole.</text>
</comment>
<comment type="developmental stage">
    <text evidence="4 7">Expressed both maternally and zygotically.</text>
</comment>
<comment type="domain">
    <text>Contains a proline-rich domain. The insertion of this domain in the DRBM 2 domain is required for stau-oskar mRNA localization.</text>
</comment>
<comment type="domain">
    <text>DRBM 3 domain binds optimally to stem-loops containing 12 bp (in vitro).</text>
</comment>
<feature type="chain" id="PRO_0000072250" description="Maternal effect protein staufen">
    <location>
        <begin position="1"/>
        <end position="1026"/>
    </location>
</feature>
<feature type="domain" description="DRBM 1" evidence="1">
    <location>
        <begin position="311"/>
        <end position="378"/>
    </location>
</feature>
<feature type="domain" description="DRBM 2" evidence="1">
    <location>
        <begin position="490"/>
        <end position="557"/>
    </location>
</feature>
<feature type="domain" description="DRBM 3" evidence="1">
    <location>
        <begin position="578"/>
        <end position="645"/>
    </location>
</feature>
<feature type="domain" description="DRBM 4" evidence="1">
    <location>
        <begin position="711"/>
        <end position="781"/>
    </location>
</feature>
<feature type="domain" description="DRBM 5" evidence="1">
    <location>
        <begin position="951"/>
        <end position="1018"/>
    </location>
</feature>
<feature type="region of interest" description="Disordered" evidence="2">
    <location>
        <begin position="16"/>
        <end position="159"/>
    </location>
</feature>
<feature type="region of interest" description="Disordered" evidence="2">
    <location>
        <begin position="190"/>
        <end position="210"/>
    </location>
</feature>
<feature type="region of interest" description="Disordered" evidence="2">
    <location>
        <begin position="234"/>
        <end position="311"/>
    </location>
</feature>
<feature type="region of interest" description="Disordered" evidence="2">
    <location>
        <begin position="647"/>
        <end position="707"/>
    </location>
</feature>
<feature type="region of interest" description="Disordered" evidence="2">
    <location>
        <begin position="855"/>
        <end position="948"/>
    </location>
</feature>
<feature type="compositionally biased region" description="Basic residues" evidence="2">
    <location>
        <begin position="16"/>
        <end position="29"/>
    </location>
</feature>
<feature type="compositionally biased region" description="Low complexity" evidence="2">
    <location>
        <begin position="70"/>
        <end position="111"/>
    </location>
</feature>
<feature type="compositionally biased region" description="Polar residues" evidence="2">
    <location>
        <begin position="112"/>
        <end position="126"/>
    </location>
</feature>
<feature type="compositionally biased region" description="Low complexity" evidence="2">
    <location>
        <begin position="192"/>
        <end position="210"/>
    </location>
</feature>
<feature type="compositionally biased region" description="Low complexity" evidence="2">
    <location>
        <begin position="234"/>
        <end position="256"/>
    </location>
</feature>
<feature type="compositionally biased region" description="Basic and acidic residues" evidence="2">
    <location>
        <begin position="267"/>
        <end position="284"/>
    </location>
</feature>
<feature type="compositionally biased region" description="Polar residues" evidence="2">
    <location>
        <begin position="285"/>
        <end position="303"/>
    </location>
</feature>
<feature type="compositionally biased region" description="Polar residues" evidence="2">
    <location>
        <begin position="678"/>
        <end position="688"/>
    </location>
</feature>
<feature type="compositionally biased region" description="Low complexity" evidence="2">
    <location>
        <begin position="864"/>
        <end position="890"/>
    </location>
</feature>
<feature type="compositionally biased region" description="Polar residues" evidence="2">
    <location>
        <begin position="891"/>
        <end position="901"/>
    </location>
</feature>
<feature type="compositionally biased region" description="Low complexity" evidence="2">
    <location>
        <begin position="902"/>
        <end position="920"/>
    </location>
</feature>
<feature type="compositionally biased region" description="Low complexity" evidence="2">
    <location>
        <begin position="934"/>
        <end position="947"/>
    </location>
</feature>
<feature type="binding site">
    <location>
        <position position="606"/>
    </location>
    <ligand>
        <name>RNA</name>
        <dbReference type="ChEBI" id="CHEBI:33697"/>
    </ligand>
</feature>
<feature type="binding site">
    <location>
        <position position="608"/>
    </location>
    <ligand>
        <name>RNA</name>
        <dbReference type="ChEBI" id="CHEBI:33697"/>
    </ligand>
</feature>
<feature type="binding site">
    <location>
        <position position="628"/>
    </location>
    <ligand>
        <name>RNA</name>
        <dbReference type="ChEBI" id="CHEBI:33697"/>
    </ligand>
</feature>
<feature type="binding site">
    <location>
        <position position="629"/>
    </location>
    <ligand>
        <name>RNA</name>
        <dbReference type="ChEBI" id="CHEBI:33697"/>
    </ligand>
</feature>
<feature type="binding site">
    <location>
        <position position="632"/>
    </location>
    <ligand>
        <name>RNA</name>
        <dbReference type="ChEBI" id="CHEBI:33697"/>
    </ligand>
</feature>
<feature type="modified residue" description="Phosphoserine" evidence="6">
    <location>
        <position position="563"/>
    </location>
</feature>
<feature type="modified residue" description="Phosphoserine" evidence="6">
    <location>
        <position position="570"/>
    </location>
</feature>
<feature type="modified residue" description="Phosphothreonine" evidence="6">
    <location>
        <position position="650"/>
    </location>
</feature>
<feature type="modified residue" description="Phosphothreonine" evidence="6">
    <location>
        <position position="655"/>
    </location>
</feature>
<feature type="modified residue" description="Phosphoserine" evidence="6">
    <location>
        <position position="676"/>
    </location>
</feature>
<feature type="splice variant" id="VSP_014781" description="In isoform B." evidence="8">
    <location>
        <begin position="1"/>
        <end position="112"/>
    </location>
</feature>
<feature type="mutagenesis site" description="Affects RNA binding without altering the conformation of the domain." evidence="3">
    <original>SQ</original>
    <variation>AA</variation>
    <location>
        <begin position="581"/>
        <end position="582"/>
    </location>
</feature>
<feature type="mutagenesis site" description="Affects RNA binding without altering the conformation of the domain." evidence="3">
    <original>HE</original>
    <variation>AA</variation>
    <location>
        <begin position="584"/>
        <end position="585"/>
    </location>
</feature>
<feature type="mutagenesis site" description="Crucial for the structure of DRBM 3." evidence="3">
    <original>I</original>
    <variation>A</variation>
    <location>
        <position position="586"/>
    </location>
</feature>
<feature type="mutagenesis site" description="Crucial for the structure of DRBM 3." evidence="3">
    <original>F</original>
    <variation>A</variation>
    <location>
        <position position="596"/>
    </location>
</feature>
<feature type="mutagenesis site" description="Strongly reduces RNA binding." evidence="3">
    <original>LREE</original>
    <variation>AAAA</variation>
    <location>
        <begin position="599"/>
        <end position="602"/>
    </location>
</feature>
<feature type="mutagenesis site" description="Abolishes RNA binding without altering the conformation of the domain." evidence="3">
    <original>H</original>
    <variation>A</variation>
    <location>
        <position position="606"/>
    </location>
</feature>
<feature type="mutagenesis site" description="Abolishes RNA binding without altering the conformation of the domain." evidence="3">
    <original>K</original>
    <variation>A</variation>
    <location>
        <position position="608"/>
    </location>
</feature>
<feature type="mutagenesis site" description="Abolishes RNA binding without altering the conformation of the domain." evidence="3">
    <original>KK</original>
    <variation>AA</variation>
    <location>
        <begin position="628"/>
        <end position="629"/>
    </location>
</feature>
<feature type="mutagenesis site" description="Abolishes RNA binding without altering the conformation of the domain." evidence="3">
    <original>K</original>
    <variation>A</variation>
    <location>
        <position position="632"/>
    </location>
</feature>
<feature type="mutagenesis site" description="No effect on RNA binding." evidence="3">
    <original>KR</original>
    <variation>AA</variation>
    <location>
        <begin position="633"/>
        <end position="634"/>
    </location>
</feature>
<feature type="mutagenesis site" description="Crucial for the structure of DRBM 3." evidence="3">
    <original>AA</original>
    <variation>SS</variation>
    <location>
        <begin position="635"/>
        <end position="636"/>
    </location>
</feature>
<feature type="sequence conflict" description="In Ref. 1; AAA73062." evidence="9" ref="1">
    <original>G</original>
    <variation>A</variation>
    <location>
        <position position="84"/>
    </location>
</feature>
<feature type="sequence conflict" description="In Ref. 1; AAA73062." evidence="9" ref="1">
    <original>PT</original>
    <variation>TM</variation>
    <location>
        <begin position="684"/>
        <end position="685"/>
    </location>
</feature>
<feature type="sequence conflict" description="In Ref. 1; AAA73062." evidence="9" ref="1">
    <original>S</original>
    <variation>C</variation>
    <location>
        <position position="797"/>
    </location>
</feature>
<feature type="sequence conflict" description="In Ref. 4; AAQ23615." evidence="9" ref="4">
    <location>
        <position position="841"/>
    </location>
</feature>
<feature type="helix" evidence="10">
    <location>
        <begin position="579"/>
        <end position="589"/>
    </location>
</feature>
<feature type="strand" evidence="10">
    <location>
        <begin position="595"/>
        <end position="601"/>
    </location>
</feature>
<feature type="strand" evidence="10">
    <location>
        <begin position="604"/>
        <end position="606"/>
    </location>
</feature>
<feature type="strand" evidence="10">
    <location>
        <begin position="610"/>
        <end position="616"/>
    </location>
</feature>
<feature type="strand" evidence="10">
    <location>
        <begin position="619"/>
        <end position="623"/>
    </location>
</feature>
<feature type="strand" evidence="10">
    <location>
        <begin position="630"/>
        <end position="632"/>
    </location>
</feature>
<feature type="helix" evidence="10">
    <location>
        <begin position="633"/>
        <end position="643"/>
    </location>
</feature>
<feature type="helix" evidence="11">
    <location>
        <begin position="953"/>
        <end position="962"/>
    </location>
</feature>
<feature type="strand" evidence="11">
    <location>
        <begin position="967"/>
        <end position="972"/>
    </location>
</feature>
<feature type="strand" evidence="11">
    <location>
        <begin position="977"/>
        <end position="986"/>
    </location>
</feature>
<feature type="strand" evidence="11">
    <location>
        <begin position="992"/>
        <end position="1000"/>
    </location>
</feature>
<feature type="helix" evidence="11">
    <location>
        <begin position="1001"/>
        <end position="1018"/>
    </location>
</feature>
<sequence length="1026" mass="110283">MQHNVHAARPAPHIRAAHHHSHSHAHMHLHPGMEQHLGPSLQQQQQPPPPPQQPPHRDLHARLNHHHLHAQQQQQQQTSSNQAGAVAAAGAAYHHGNINSNSGSNISSNSNQMQKIRQQHQHLSSSNGLLGNQPPGPPPQAFNPLAGNPAALAYNQLPPHPPHHMAAHLGSYAAPPPHYYMSQAKPAKYNHYGSNANSNSGSNNSNSNYAPKAILQNTYRNQKVVVPPVVQEVTPVPEPPVTTNNATTNSTSNSTVIASEPVTQEDTSQKPETRQEPASADDHVSTGNIDATGALSNEDTSSSGRGGKDKTPMCLVNELARYNKITHQYRLTEERGPAHCKTFTVTLMLGDEEYSADGFKIKKAQHLAASKAIEETMYKHPPPKIRRSEEGGPMRTHITPTVELNALAMKLGQRTFYLLDPTQIPPTDSIVPPEFAGGHLLTAPGPGMPQPPPPPAYALRQRLGNGFVPIPSQPMHPHFFHGPGQRPFPPKFPSRFALPPPLGAHVHHGPNGPFPSVPTPPSKITLFVGKQKFVGIGRTLQQAKHDAAARALQVLKTQAISASEEALEDSMDEGDKKSPISQVHEIGIKRNMTVHFKVLREEGPAHMKNFITACIVGSIVTEGEGNGKKVSKKRAAEKMLVELQKLPPLTPTKQTPLKRIKVKTPGKSGAAAREGSVVSGTDGPTQTGKPERRKRLNPPKDKLIDMDDADNPITKLIQLQQTRKEKEPIFELIAKNGNETARRREFVMEVSASGSTARGTGNSKKLAKRNAAQALFELLEAVQVTPTNETQSSEECSTSATMSAVTAPAVEATAEGKVPMVATPVGPMPGILILRQNKKPAKKRDQIVIVKSNVESKEEEANKEVAVAAEENSNNSANSGDSSNSSSGDSQATEAASESALNTSTGSNTSGVSSNSSNVGANTDGNNHAESKNNTESSSNSTSNTQSAGVHMKEQLLYLSKLLDFEVNFSDYPKGNHNEFLTIVTLSTHPPQICHGVGKSSEESQNDAASNALKILSKLGLNNAMK</sequence>
<accession>P25159</accession>
<accession>Q6NQY8</accession>
<accession>Q86PB7</accession>
<accession>Q9V8B8</accession>
<accession>Q9V8B9</accession>
<evidence type="ECO:0000255" key="1">
    <source>
        <dbReference type="PROSITE-ProRule" id="PRU00266"/>
    </source>
</evidence>
<evidence type="ECO:0000256" key="2">
    <source>
        <dbReference type="SAM" id="MobiDB-lite"/>
    </source>
</evidence>
<evidence type="ECO:0000269" key="3">
    <source>
    </source>
</evidence>
<evidence type="ECO:0000269" key="4">
    <source>
    </source>
</evidence>
<evidence type="ECO:0000269" key="5">
    <source>
    </source>
</evidence>
<evidence type="ECO:0000269" key="6">
    <source>
    </source>
</evidence>
<evidence type="ECO:0000269" key="7">
    <source>
    </source>
</evidence>
<evidence type="ECO:0000303" key="8">
    <source ref="4"/>
</evidence>
<evidence type="ECO:0000305" key="9"/>
<evidence type="ECO:0007829" key="10">
    <source>
        <dbReference type="PDB" id="1EKZ"/>
    </source>
</evidence>
<evidence type="ECO:0007829" key="11">
    <source>
        <dbReference type="PDB" id="5CFF"/>
    </source>
</evidence>
<protein>
    <recommendedName>
        <fullName>Maternal effect protein staufen</fullName>
    </recommendedName>
</protein>
<gene>
    <name type="primary">stau</name>
    <name type="ORF">CG5753</name>
</gene>
<dbReference type="EMBL" id="M69111">
    <property type="protein sequence ID" value="AAA73062.1"/>
    <property type="molecule type" value="mRNA"/>
</dbReference>
<dbReference type="EMBL" id="AE013599">
    <property type="protein sequence ID" value="AAF57752.1"/>
    <property type="molecule type" value="Genomic_DNA"/>
</dbReference>
<dbReference type="EMBL" id="AE013599">
    <property type="protein sequence ID" value="AAF57753.1"/>
    <property type="molecule type" value="Genomic_DNA"/>
</dbReference>
<dbReference type="EMBL" id="BT003228">
    <property type="protein sequence ID" value="AAO24983.1"/>
    <property type="molecule type" value="mRNA"/>
</dbReference>
<dbReference type="EMBL" id="BT010297">
    <property type="protein sequence ID" value="AAQ23615.1"/>
    <property type="molecule type" value="mRNA"/>
</dbReference>
<dbReference type="PIR" id="A40315">
    <property type="entry name" value="A40315"/>
</dbReference>
<dbReference type="RefSeq" id="NP_001163185.1">
    <property type="nucleotide sequence ID" value="NM_001169714.2"/>
</dbReference>
<dbReference type="RefSeq" id="NP_476751.1">
    <molecule id="P25159-1"/>
    <property type="nucleotide sequence ID" value="NM_057403.4"/>
</dbReference>
<dbReference type="RefSeq" id="NP_725748.1">
    <molecule id="P25159-2"/>
    <property type="nucleotide sequence ID" value="NM_166263.2"/>
</dbReference>
<dbReference type="PDB" id="1EKZ">
    <property type="method" value="NMR"/>
    <property type="chains" value="A=571-646"/>
</dbReference>
<dbReference type="PDB" id="1STU">
    <property type="method" value="NMR"/>
    <property type="chains" value="A=579-646"/>
</dbReference>
<dbReference type="PDB" id="5CFF">
    <property type="method" value="X-ray"/>
    <property type="resolution" value="2.50 A"/>
    <property type="chains" value="E/F/G/H=953-1019"/>
</dbReference>
<dbReference type="PDBsum" id="1EKZ"/>
<dbReference type="PDBsum" id="1STU"/>
<dbReference type="PDBsum" id="5CFF"/>
<dbReference type="SMR" id="P25159"/>
<dbReference type="BioGRID" id="62749">
    <property type="interactions" value="88"/>
</dbReference>
<dbReference type="FunCoup" id="P25159">
    <property type="interactions" value="628"/>
</dbReference>
<dbReference type="IntAct" id="P25159">
    <property type="interactions" value="6"/>
</dbReference>
<dbReference type="STRING" id="7227.FBpp0085962"/>
<dbReference type="GlyGen" id="P25159">
    <property type="glycosylation" value="2 sites"/>
</dbReference>
<dbReference type="iPTMnet" id="P25159"/>
<dbReference type="PaxDb" id="7227-FBpp0085962"/>
<dbReference type="ABCD" id="P25159">
    <property type="antibodies" value="2 sequenced antibodies"/>
</dbReference>
<dbReference type="EnsemblMetazoa" id="FBtr0086783">
    <molecule id="P25159-1"/>
    <property type="protein sequence ID" value="FBpp0085962"/>
    <property type="gene ID" value="FBgn0003520"/>
</dbReference>
<dbReference type="EnsemblMetazoa" id="FBtr0086784">
    <molecule id="P25159-2"/>
    <property type="protein sequence ID" value="FBpp0085963"/>
    <property type="gene ID" value="FBgn0003520"/>
</dbReference>
<dbReference type="GeneID" id="37065"/>
<dbReference type="KEGG" id="dme:Dmel_CG5753"/>
<dbReference type="UCSC" id="CG5753-RA">
    <molecule id="P25159-1"/>
    <property type="organism name" value="d. melanogaster"/>
</dbReference>
<dbReference type="AGR" id="FB:FBgn0003520"/>
<dbReference type="CTD" id="37065"/>
<dbReference type="FlyBase" id="FBgn0003520">
    <property type="gene designation" value="stau"/>
</dbReference>
<dbReference type="VEuPathDB" id="VectorBase:FBgn0003520"/>
<dbReference type="eggNOG" id="KOG3732">
    <property type="taxonomic scope" value="Eukaryota"/>
</dbReference>
<dbReference type="InParanoid" id="P25159"/>
<dbReference type="OMA" id="TKQTPMK"/>
<dbReference type="OrthoDB" id="10037267at2759"/>
<dbReference type="PhylomeDB" id="P25159"/>
<dbReference type="SignaLink" id="P25159"/>
<dbReference type="BioGRID-ORCS" id="37065">
    <property type="hits" value="0 hits in 3 CRISPR screens"/>
</dbReference>
<dbReference type="CD-CODE" id="19A54EA0">
    <property type="entry name" value="Sponge body"/>
</dbReference>
<dbReference type="CD-CODE" id="E7B423DE">
    <property type="entry name" value="Mimi granules"/>
</dbReference>
<dbReference type="ChiTaRS" id="stau">
    <property type="organism name" value="fly"/>
</dbReference>
<dbReference type="EvolutionaryTrace" id="P25159"/>
<dbReference type="GenomeRNAi" id="37065"/>
<dbReference type="PRO" id="PR:P25159"/>
<dbReference type="Proteomes" id="UP000000803">
    <property type="component" value="Chromosome 2R"/>
</dbReference>
<dbReference type="Bgee" id="FBgn0003520">
    <property type="expression patterns" value="Expressed in distal medullary amacrine neuron Dm11 in insect head and 275 other cell types or tissues"/>
</dbReference>
<dbReference type="ExpressionAtlas" id="P25159">
    <property type="expression patterns" value="baseline and differential"/>
</dbReference>
<dbReference type="GO" id="GO:0045179">
    <property type="term" value="C:apical cortex"/>
    <property type="evidence" value="ECO:0000314"/>
    <property type="project" value="FlyBase"/>
</dbReference>
<dbReference type="GO" id="GO:0045177">
    <property type="term" value="C:apical part of cell"/>
    <property type="evidence" value="ECO:0000314"/>
    <property type="project" value="FlyBase"/>
</dbReference>
<dbReference type="GO" id="GO:0016324">
    <property type="term" value="C:apical plasma membrane"/>
    <property type="evidence" value="ECO:0000314"/>
    <property type="project" value="FlyBase"/>
</dbReference>
<dbReference type="GO" id="GO:0045180">
    <property type="term" value="C:basal cortex"/>
    <property type="evidence" value="ECO:0000314"/>
    <property type="project" value="FlyBase"/>
</dbReference>
<dbReference type="GO" id="GO:0009925">
    <property type="term" value="C:basal plasma membrane"/>
    <property type="evidence" value="ECO:0000314"/>
    <property type="project" value="FlyBase"/>
</dbReference>
<dbReference type="GO" id="GO:0005938">
    <property type="term" value="C:cell cortex"/>
    <property type="evidence" value="ECO:0000314"/>
    <property type="project" value="FlyBase"/>
</dbReference>
<dbReference type="GO" id="GO:0005737">
    <property type="term" value="C:cytoplasm"/>
    <property type="evidence" value="ECO:0000314"/>
    <property type="project" value="FlyBase"/>
</dbReference>
<dbReference type="GO" id="GO:0036464">
    <property type="term" value="C:cytoplasmic ribonucleoprotein granule"/>
    <property type="evidence" value="ECO:0000314"/>
    <property type="project" value="FlyBase"/>
</dbReference>
<dbReference type="GO" id="GO:0010494">
    <property type="term" value="C:cytoplasmic stress granule"/>
    <property type="evidence" value="ECO:0000318"/>
    <property type="project" value="GO_Central"/>
</dbReference>
<dbReference type="GO" id="GO:0032839">
    <property type="term" value="C:dendrite cytoplasm"/>
    <property type="evidence" value="ECO:0007669"/>
    <property type="project" value="GOC"/>
</dbReference>
<dbReference type="GO" id="GO:0060293">
    <property type="term" value="C:germ plasm"/>
    <property type="evidence" value="ECO:0000314"/>
    <property type="project" value="BHF-UCL"/>
</dbReference>
<dbReference type="GO" id="GO:0043005">
    <property type="term" value="C:neuron projection"/>
    <property type="evidence" value="ECO:0000318"/>
    <property type="project" value="GO_Central"/>
</dbReference>
<dbReference type="GO" id="GO:0043025">
    <property type="term" value="C:neuronal cell body"/>
    <property type="evidence" value="ECO:0000314"/>
    <property type="project" value="UniProtKB"/>
</dbReference>
<dbReference type="GO" id="GO:0071598">
    <property type="term" value="C:neuronal ribonucleoprotein granule"/>
    <property type="evidence" value="ECO:0000314"/>
    <property type="project" value="UniProtKB"/>
</dbReference>
<dbReference type="GO" id="GO:0000932">
    <property type="term" value="C:P-body"/>
    <property type="evidence" value="ECO:0000314"/>
    <property type="project" value="FlyBase"/>
</dbReference>
<dbReference type="GO" id="GO:0005886">
    <property type="term" value="C:plasma membrane"/>
    <property type="evidence" value="ECO:0000318"/>
    <property type="project" value="GO_Central"/>
</dbReference>
<dbReference type="GO" id="GO:0061803">
    <property type="term" value="C:posterior cell cortex"/>
    <property type="evidence" value="ECO:0000314"/>
    <property type="project" value="FlyBase"/>
</dbReference>
<dbReference type="GO" id="GO:0071212">
    <property type="term" value="C:subsynaptic reticulum"/>
    <property type="evidence" value="ECO:0000314"/>
    <property type="project" value="FlyBase"/>
</dbReference>
<dbReference type="GO" id="GO:0003725">
    <property type="term" value="F:double-stranded RNA binding"/>
    <property type="evidence" value="ECO:0000250"/>
    <property type="project" value="FlyBase"/>
</dbReference>
<dbReference type="GO" id="GO:0106222">
    <property type="term" value="F:lncRNA binding"/>
    <property type="evidence" value="ECO:0000314"/>
    <property type="project" value="FlyBase"/>
</dbReference>
<dbReference type="GO" id="GO:0003730">
    <property type="term" value="F:mRNA 3'-UTR binding"/>
    <property type="evidence" value="ECO:0000314"/>
    <property type="project" value="FlyBase"/>
</dbReference>
<dbReference type="GO" id="GO:0003729">
    <property type="term" value="F:mRNA binding"/>
    <property type="evidence" value="ECO:0000314"/>
    <property type="project" value="FlyBase"/>
</dbReference>
<dbReference type="GO" id="GO:0008595">
    <property type="term" value="P:anterior/posterior axis specification, embryo"/>
    <property type="evidence" value="ECO:0000316"/>
    <property type="project" value="FlyBase"/>
</dbReference>
<dbReference type="GO" id="GO:0098964">
    <property type="term" value="P:anterograde dendritic transport of messenger ribonucleoprotein complex"/>
    <property type="evidence" value="ECO:0000318"/>
    <property type="project" value="GO_Central"/>
</dbReference>
<dbReference type="GO" id="GO:0045167">
    <property type="term" value="P:asymmetric protein localization involved in cell fate determination"/>
    <property type="evidence" value="ECO:0000304"/>
    <property type="project" value="FlyBase"/>
</dbReference>
<dbReference type="GO" id="GO:0045450">
    <property type="term" value="P:bicoid mRNA localization"/>
    <property type="evidence" value="ECO:0000304"/>
    <property type="project" value="FlyBase"/>
</dbReference>
<dbReference type="GO" id="GO:0007281">
    <property type="term" value="P:germ cell development"/>
    <property type="evidence" value="ECO:0000318"/>
    <property type="project" value="GO_Central"/>
</dbReference>
<dbReference type="GO" id="GO:0008298">
    <property type="term" value="P:intracellular mRNA localization"/>
    <property type="evidence" value="ECO:0000315"/>
    <property type="project" value="FlyBase"/>
</dbReference>
<dbReference type="GO" id="GO:0007616">
    <property type="term" value="P:long-term memory"/>
    <property type="evidence" value="ECO:0000304"/>
    <property type="project" value="FlyBase"/>
</dbReference>
<dbReference type="GO" id="GO:0007400">
    <property type="term" value="P:neuroblast fate determination"/>
    <property type="evidence" value="ECO:0000304"/>
    <property type="project" value="FlyBase"/>
</dbReference>
<dbReference type="GO" id="GO:0048477">
    <property type="term" value="P:oogenesis"/>
    <property type="evidence" value="ECO:0000304"/>
    <property type="project" value="FlyBase"/>
</dbReference>
<dbReference type="GO" id="GO:0007315">
    <property type="term" value="P:pole plasm assembly"/>
    <property type="evidence" value="ECO:0000315"/>
    <property type="project" value="FlyBase"/>
</dbReference>
<dbReference type="GO" id="GO:0007318">
    <property type="term" value="P:pole plasm protein localization"/>
    <property type="evidence" value="ECO:0000315"/>
    <property type="project" value="FlyBase"/>
</dbReference>
<dbReference type="GO" id="GO:0007316">
    <property type="term" value="P:pole plasm RNA localization"/>
    <property type="evidence" value="ECO:0000315"/>
    <property type="project" value="FlyBase"/>
</dbReference>
<dbReference type="GO" id="GO:0010606">
    <property type="term" value="P:positive regulation of cytoplasmic mRNA processing body assembly"/>
    <property type="evidence" value="ECO:0000315"/>
    <property type="project" value="FlyBase"/>
</dbReference>
<dbReference type="GO" id="GO:0045887">
    <property type="term" value="P:positive regulation of synaptic assembly at neuromuscular junction"/>
    <property type="evidence" value="ECO:0000315"/>
    <property type="project" value="FlyBase"/>
</dbReference>
<dbReference type="GO" id="GO:0035418">
    <property type="term" value="P:protein localization to synapse"/>
    <property type="evidence" value="ECO:0000315"/>
    <property type="project" value="FlyBase"/>
</dbReference>
<dbReference type="GO" id="GO:0046011">
    <property type="term" value="P:regulation of oskar mRNA translation"/>
    <property type="evidence" value="ECO:0000304"/>
    <property type="project" value="FlyBase"/>
</dbReference>
<dbReference type="GO" id="GO:0007317">
    <property type="term" value="P:regulation of pole plasm oskar mRNA localization"/>
    <property type="evidence" value="ECO:0000316"/>
    <property type="project" value="FlyBase"/>
</dbReference>
<dbReference type="GO" id="GO:0006403">
    <property type="term" value="P:RNA localization"/>
    <property type="evidence" value="ECO:0000315"/>
    <property type="project" value="FlyBase"/>
</dbReference>
<dbReference type="CDD" id="cd19857">
    <property type="entry name" value="DSRM_STAU_rpt1"/>
    <property type="match status" value="1"/>
</dbReference>
<dbReference type="CDD" id="cd19858">
    <property type="entry name" value="DSRM_STAU_rpt2"/>
    <property type="match status" value="1"/>
</dbReference>
<dbReference type="CDD" id="cd19859">
    <property type="entry name" value="DSRM_STAU_rpt3"/>
    <property type="match status" value="1"/>
</dbReference>
<dbReference type="CDD" id="cd19860">
    <property type="entry name" value="DSRM_STAU_rpt4"/>
    <property type="match status" value="1"/>
</dbReference>
<dbReference type="CDD" id="cd19861">
    <property type="entry name" value="DSRM_STAU_rpt5"/>
    <property type="match status" value="1"/>
</dbReference>
<dbReference type="FunFam" id="3.30.160.20:FF:000073">
    <property type="entry name" value="Double-stranded RNA-binding protein Staufen homolog"/>
    <property type="match status" value="1"/>
</dbReference>
<dbReference type="FunFam" id="3.30.160.20:FF:000007">
    <property type="entry name" value="Double-stranded RNA-binding protein Staufen homolog 1"/>
    <property type="match status" value="2"/>
</dbReference>
<dbReference type="Gene3D" id="3.30.160.20">
    <property type="match status" value="5"/>
</dbReference>
<dbReference type="InterPro" id="IPR051740">
    <property type="entry name" value="DRBM-containing_protein"/>
</dbReference>
<dbReference type="InterPro" id="IPR014720">
    <property type="entry name" value="dsRBD_dom"/>
</dbReference>
<dbReference type="InterPro" id="IPR032478">
    <property type="entry name" value="Staufen_C"/>
</dbReference>
<dbReference type="PANTHER" id="PTHR46054">
    <property type="entry name" value="MATERNAL EFFECT PROTEIN STAUFEN"/>
    <property type="match status" value="1"/>
</dbReference>
<dbReference type="PANTHER" id="PTHR46054:SF3">
    <property type="entry name" value="MATERNAL EFFECT PROTEIN STAUFEN"/>
    <property type="match status" value="1"/>
</dbReference>
<dbReference type="Pfam" id="PF00035">
    <property type="entry name" value="dsrm"/>
    <property type="match status" value="3"/>
</dbReference>
<dbReference type="Pfam" id="PF16482">
    <property type="entry name" value="Staufen_C"/>
    <property type="match status" value="1"/>
</dbReference>
<dbReference type="SMART" id="SM00358">
    <property type="entry name" value="DSRM"/>
    <property type="match status" value="4"/>
</dbReference>
<dbReference type="SUPFAM" id="SSF54768">
    <property type="entry name" value="dsRNA-binding domain-like"/>
    <property type="match status" value="5"/>
</dbReference>
<dbReference type="PROSITE" id="PS50137">
    <property type="entry name" value="DS_RBD"/>
    <property type="match status" value="5"/>
</dbReference>
<name>STAU_DROME</name>
<keyword id="KW-0002">3D-structure</keyword>
<keyword id="KW-0025">Alternative splicing</keyword>
<keyword id="KW-0963">Cytoplasm</keyword>
<keyword id="KW-0217">Developmental protein</keyword>
<keyword id="KW-0597">Phosphoprotein</keyword>
<keyword id="KW-1185">Reference proteome</keyword>
<keyword id="KW-0677">Repeat</keyword>
<keyword id="KW-0694">RNA-binding</keyword>
<proteinExistence type="evidence at protein level"/>